<keyword id="KW-0119">Carbohydrate metabolism</keyword>
<keyword id="KW-0963">Cytoplasm</keyword>
<keyword id="KW-0413">Isomerase</keyword>
<keyword id="KW-0684">Rhamnose metabolism</keyword>
<proteinExistence type="inferred from homology"/>
<name>RHAM_ECOUT</name>
<dbReference type="EC" id="5.1.3.32" evidence="1"/>
<dbReference type="EMBL" id="CP000243">
    <property type="protein sequence ID" value="ABE09896.1"/>
    <property type="molecule type" value="Genomic_DNA"/>
</dbReference>
<dbReference type="RefSeq" id="WP_000619492.1">
    <property type="nucleotide sequence ID" value="NZ_CP064825.1"/>
</dbReference>
<dbReference type="SMR" id="Q1R418"/>
<dbReference type="KEGG" id="eci:UTI89_C4484"/>
<dbReference type="HOGENOM" id="CLU_100689_2_0_6"/>
<dbReference type="UniPathway" id="UPA00125"/>
<dbReference type="Proteomes" id="UP000001952">
    <property type="component" value="Chromosome"/>
</dbReference>
<dbReference type="GO" id="GO:0005737">
    <property type="term" value="C:cytoplasm"/>
    <property type="evidence" value="ECO:0007669"/>
    <property type="project" value="UniProtKB-SubCell"/>
</dbReference>
<dbReference type="GO" id="GO:0062192">
    <property type="term" value="F:L-rhamnose mutarotase activity"/>
    <property type="evidence" value="ECO:0007669"/>
    <property type="project" value="UniProtKB-EC"/>
</dbReference>
<dbReference type="GO" id="GO:0019301">
    <property type="term" value="P:rhamnose catabolic process"/>
    <property type="evidence" value="ECO:0007669"/>
    <property type="project" value="TreeGrafter"/>
</dbReference>
<dbReference type="FunFam" id="3.30.70.100:FF:000013">
    <property type="entry name" value="L-rhamnose mutarotase"/>
    <property type="match status" value="1"/>
</dbReference>
<dbReference type="Gene3D" id="3.30.70.100">
    <property type="match status" value="1"/>
</dbReference>
<dbReference type="HAMAP" id="MF_01663">
    <property type="entry name" value="L_rham_rotase"/>
    <property type="match status" value="1"/>
</dbReference>
<dbReference type="InterPro" id="IPR011008">
    <property type="entry name" value="Dimeric_a/b-barrel"/>
</dbReference>
<dbReference type="InterPro" id="IPR013448">
    <property type="entry name" value="L-rhamnose_mutarotase"/>
</dbReference>
<dbReference type="InterPro" id="IPR008000">
    <property type="entry name" value="Rham/fucose_mutarotase"/>
</dbReference>
<dbReference type="NCBIfam" id="TIGR02625">
    <property type="entry name" value="YiiL_rotase"/>
    <property type="match status" value="1"/>
</dbReference>
<dbReference type="PANTHER" id="PTHR34389">
    <property type="entry name" value="L-RHAMNOSE MUTAROTASE"/>
    <property type="match status" value="1"/>
</dbReference>
<dbReference type="PANTHER" id="PTHR34389:SF2">
    <property type="entry name" value="L-RHAMNOSE MUTAROTASE"/>
    <property type="match status" value="1"/>
</dbReference>
<dbReference type="Pfam" id="PF05336">
    <property type="entry name" value="rhaM"/>
    <property type="match status" value="1"/>
</dbReference>
<dbReference type="SUPFAM" id="SSF54909">
    <property type="entry name" value="Dimeric alpha+beta barrel"/>
    <property type="match status" value="1"/>
</dbReference>
<protein>
    <recommendedName>
        <fullName evidence="1">L-rhamnose mutarotase</fullName>
        <ecNumber evidence="1">5.1.3.32</ecNumber>
    </recommendedName>
    <alternativeName>
        <fullName evidence="1">Rhamnose 1-epimerase</fullName>
    </alternativeName>
    <alternativeName>
        <fullName evidence="1">Type-3 mutarotase</fullName>
    </alternativeName>
</protein>
<comment type="function">
    <text evidence="1">Involved in the anomeric conversion of L-rhamnose.</text>
</comment>
<comment type="catalytic activity">
    <reaction evidence="1">
        <text>alpha-L-rhamnose = beta-L-rhamnose</text>
        <dbReference type="Rhea" id="RHEA:25584"/>
        <dbReference type="ChEBI" id="CHEBI:27586"/>
        <dbReference type="ChEBI" id="CHEBI:27907"/>
        <dbReference type="EC" id="5.1.3.32"/>
    </reaction>
</comment>
<comment type="pathway">
    <text evidence="1">Carbohydrate metabolism; L-rhamnose metabolism.</text>
</comment>
<comment type="subunit">
    <text evidence="1">Homodimer.</text>
</comment>
<comment type="subcellular location">
    <subcellularLocation>
        <location evidence="1">Cytoplasm</location>
    </subcellularLocation>
</comment>
<comment type="similarity">
    <text evidence="1">Belongs to the rhamnose mutarotase family.</text>
</comment>
<sequence>MIRKAFVMQVNPDAHEEYQRRHNPIWPELEAVLKSHGAHNYAIYLDKAHNLLFATVEIESEERWNAVASTDVCQRWWKYMTDVMPANADNSPVSSELQEVFYLP</sequence>
<gene>
    <name evidence="1" type="primary">rhaM</name>
    <name type="ordered locus">UTI89_C4484</name>
</gene>
<accession>Q1R418</accession>
<organism>
    <name type="scientific">Escherichia coli (strain UTI89 / UPEC)</name>
    <dbReference type="NCBI Taxonomy" id="364106"/>
    <lineage>
        <taxon>Bacteria</taxon>
        <taxon>Pseudomonadati</taxon>
        <taxon>Pseudomonadota</taxon>
        <taxon>Gammaproteobacteria</taxon>
        <taxon>Enterobacterales</taxon>
        <taxon>Enterobacteriaceae</taxon>
        <taxon>Escherichia</taxon>
    </lineage>
</organism>
<evidence type="ECO:0000255" key="1">
    <source>
        <dbReference type="HAMAP-Rule" id="MF_01663"/>
    </source>
</evidence>
<reference key="1">
    <citation type="journal article" date="2006" name="Proc. Natl. Acad. Sci. U.S.A.">
        <title>Identification of genes subject to positive selection in uropathogenic strains of Escherichia coli: a comparative genomics approach.</title>
        <authorList>
            <person name="Chen S.L."/>
            <person name="Hung C.-S."/>
            <person name="Xu J."/>
            <person name="Reigstad C.S."/>
            <person name="Magrini V."/>
            <person name="Sabo A."/>
            <person name="Blasiar D."/>
            <person name="Bieri T."/>
            <person name="Meyer R.R."/>
            <person name="Ozersky P."/>
            <person name="Armstrong J.R."/>
            <person name="Fulton R.S."/>
            <person name="Latreille J.P."/>
            <person name="Spieth J."/>
            <person name="Hooton T.M."/>
            <person name="Mardis E.R."/>
            <person name="Hultgren S.J."/>
            <person name="Gordon J.I."/>
        </authorList>
    </citation>
    <scope>NUCLEOTIDE SEQUENCE [LARGE SCALE GENOMIC DNA]</scope>
    <source>
        <strain>UTI89 / UPEC</strain>
    </source>
</reference>
<feature type="chain" id="PRO_0000344572" description="L-rhamnose mutarotase">
    <location>
        <begin position="1"/>
        <end position="104"/>
    </location>
</feature>
<feature type="active site" description="Proton donor" evidence="1">
    <location>
        <position position="22"/>
    </location>
</feature>
<feature type="binding site" evidence="1">
    <location>
        <position position="18"/>
    </location>
    <ligand>
        <name>substrate</name>
    </ligand>
</feature>
<feature type="binding site" evidence="1">
    <location>
        <position position="41"/>
    </location>
    <ligand>
        <name>substrate</name>
    </ligand>
</feature>
<feature type="binding site" evidence="1">
    <location>
        <begin position="76"/>
        <end position="77"/>
    </location>
    <ligand>
        <name>substrate</name>
    </ligand>
</feature>